<dbReference type="EC" id="4.2.1.11" evidence="1"/>
<dbReference type="EMBL" id="CP000724">
    <property type="protein sequence ID" value="ABR49698.1"/>
    <property type="molecule type" value="Genomic_DNA"/>
</dbReference>
<dbReference type="RefSeq" id="WP_012064658.1">
    <property type="nucleotide sequence ID" value="NC_009633.1"/>
</dbReference>
<dbReference type="SMR" id="A6TU30"/>
<dbReference type="STRING" id="293826.Amet_3576"/>
<dbReference type="KEGG" id="amt:Amet_3576"/>
<dbReference type="eggNOG" id="COG0148">
    <property type="taxonomic scope" value="Bacteria"/>
</dbReference>
<dbReference type="HOGENOM" id="CLU_031223_2_1_9"/>
<dbReference type="OrthoDB" id="9804716at2"/>
<dbReference type="UniPathway" id="UPA00109">
    <property type="reaction ID" value="UER00187"/>
</dbReference>
<dbReference type="Proteomes" id="UP000001572">
    <property type="component" value="Chromosome"/>
</dbReference>
<dbReference type="GO" id="GO:0009986">
    <property type="term" value="C:cell surface"/>
    <property type="evidence" value="ECO:0007669"/>
    <property type="project" value="UniProtKB-SubCell"/>
</dbReference>
<dbReference type="GO" id="GO:0005576">
    <property type="term" value="C:extracellular region"/>
    <property type="evidence" value="ECO:0007669"/>
    <property type="project" value="UniProtKB-SubCell"/>
</dbReference>
<dbReference type="GO" id="GO:0000015">
    <property type="term" value="C:phosphopyruvate hydratase complex"/>
    <property type="evidence" value="ECO:0007669"/>
    <property type="project" value="InterPro"/>
</dbReference>
<dbReference type="GO" id="GO:0000287">
    <property type="term" value="F:magnesium ion binding"/>
    <property type="evidence" value="ECO:0007669"/>
    <property type="project" value="UniProtKB-UniRule"/>
</dbReference>
<dbReference type="GO" id="GO:0004634">
    <property type="term" value="F:phosphopyruvate hydratase activity"/>
    <property type="evidence" value="ECO:0007669"/>
    <property type="project" value="UniProtKB-UniRule"/>
</dbReference>
<dbReference type="GO" id="GO:0006096">
    <property type="term" value="P:glycolytic process"/>
    <property type="evidence" value="ECO:0007669"/>
    <property type="project" value="UniProtKB-UniRule"/>
</dbReference>
<dbReference type="CDD" id="cd03313">
    <property type="entry name" value="enolase"/>
    <property type="match status" value="1"/>
</dbReference>
<dbReference type="FunFam" id="3.20.20.120:FF:000001">
    <property type="entry name" value="Enolase"/>
    <property type="match status" value="1"/>
</dbReference>
<dbReference type="FunFam" id="3.30.390.10:FF:000001">
    <property type="entry name" value="Enolase"/>
    <property type="match status" value="1"/>
</dbReference>
<dbReference type="Gene3D" id="3.20.20.120">
    <property type="entry name" value="Enolase-like C-terminal domain"/>
    <property type="match status" value="1"/>
</dbReference>
<dbReference type="Gene3D" id="3.30.390.10">
    <property type="entry name" value="Enolase-like, N-terminal domain"/>
    <property type="match status" value="1"/>
</dbReference>
<dbReference type="HAMAP" id="MF_00318">
    <property type="entry name" value="Enolase"/>
    <property type="match status" value="1"/>
</dbReference>
<dbReference type="InterPro" id="IPR000941">
    <property type="entry name" value="Enolase"/>
</dbReference>
<dbReference type="InterPro" id="IPR036849">
    <property type="entry name" value="Enolase-like_C_sf"/>
</dbReference>
<dbReference type="InterPro" id="IPR029017">
    <property type="entry name" value="Enolase-like_N"/>
</dbReference>
<dbReference type="InterPro" id="IPR020810">
    <property type="entry name" value="Enolase_C"/>
</dbReference>
<dbReference type="InterPro" id="IPR020809">
    <property type="entry name" value="Enolase_CS"/>
</dbReference>
<dbReference type="InterPro" id="IPR020811">
    <property type="entry name" value="Enolase_N"/>
</dbReference>
<dbReference type="NCBIfam" id="TIGR01060">
    <property type="entry name" value="eno"/>
    <property type="match status" value="1"/>
</dbReference>
<dbReference type="PANTHER" id="PTHR11902">
    <property type="entry name" value="ENOLASE"/>
    <property type="match status" value="1"/>
</dbReference>
<dbReference type="PANTHER" id="PTHR11902:SF1">
    <property type="entry name" value="ENOLASE"/>
    <property type="match status" value="1"/>
</dbReference>
<dbReference type="Pfam" id="PF00113">
    <property type="entry name" value="Enolase_C"/>
    <property type="match status" value="1"/>
</dbReference>
<dbReference type="Pfam" id="PF03952">
    <property type="entry name" value="Enolase_N"/>
    <property type="match status" value="1"/>
</dbReference>
<dbReference type="PIRSF" id="PIRSF001400">
    <property type="entry name" value="Enolase"/>
    <property type="match status" value="1"/>
</dbReference>
<dbReference type="PRINTS" id="PR00148">
    <property type="entry name" value="ENOLASE"/>
</dbReference>
<dbReference type="SFLD" id="SFLDF00002">
    <property type="entry name" value="enolase"/>
    <property type="match status" value="1"/>
</dbReference>
<dbReference type="SFLD" id="SFLDG00178">
    <property type="entry name" value="enolase"/>
    <property type="match status" value="1"/>
</dbReference>
<dbReference type="SMART" id="SM01192">
    <property type="entry name" value="Enolase_C"/>
    <property type="match status" value="1"/>
</dbReference>
<dbReference type="SMART" id="SM01193">
    <property type="entry name" value="Enolase_N"/>
    <property type="match status" value="1"/>
</dbReference>
<dbReference type="SUPFAM" id="SSF51604">
    <property type="entry name" value="Enolase C-terminal domain-like"/>
    <property type="match status" value="1"/>
</dbReference>
<dbReference type="SUPFAM" id="SSF54826">
    <property type="entry name" value="Enolase N-terminal domain-like"/>
    <property type="match status" value="1"/>
</dbReference>
<dbReference type="PROSITE" id="PS00164">
    <property type="entry name" value="ENOLASE"/>
    <property type="match status" value="1"/>
</dbReference>
<reference key="1">
    <citation type="journal article" date="2016" name="Genome Announc.">
        <title>Complete genome sequence of Alkaliphilus metalliredigens strain QYMF, an alkaliphilic and metal-reducing bacterium isolated from borax-contaminated leachate ponds.</title>
        <authorList>
            <person name="Hwang C."/>
            <person name="Copeland A."/>
            <person name="Lucas S."/>
            <person name="Lapidus A."/>
            <person name="Barry K."/>
            <person name="Detter J.C."/>
            <person name="Glavina Del Rio T."/>
            <person name="Hammon N."/>
            <person name="Israni S."/>
            <person name="Dalin E."/>
            <person name="Tice H."/>
            <person name="Pitluck S."/>
            <person name="Chertkov O."/>
            <person name="Brettin T."/>
            <person name="Bruce D."/>
            <person name="Han C."/>
            <person name="Schmutz J."/>
            <person name="Larimer F."/>
            <person name="Land M.L."/>
            <person name="Hauser L."/>
            <person name="Kyrpides N."/>
            <person name="Mikhailova N."/>
            <person name="Ye Q."/>
            <person name="Zhou J."/>
            <person name="Richardson P."/>
            <person name="Fields M.W."/>
        </authorList>
    </citation>
    <scope>NUCLEOTIDE SEQUENCE [LARGE SCALE GENOMIC DNA]</scope>
    <source>
        <strain>QYMF</strain>
    </source>
</reference>
<organism>
    <name type="scientific">Alkaliphilus metalliredigens (strain QYMF)</name>
    <dbReference type="NCBI Taxonomy" id="293826"/>
    <lineage>
        <taxon>Bacteria</taxon>
        <taxon>Bacillati</taxon>
        <taxon>Bacillota</taxon>
        <taxon>Clostridia</taxon>
        <taxon>Peptostreptococcales</taxon>
        <taxon>Natronincolaceae</taxon>
        <taxon>Alkaliphilus</taxon>
    </lineage>
</organism>
<gene>
    <name evidence="1" type="primary">eno</name>
    <name type="ordered locus">Amet_3576</name>
</gene>
<sequence length="430" mass="46416">MTIISDVYAREVLDSRGNPTIEVEVYLESGVLGRAIVPSGASTGAFEAVELRDGDKGRYLGKGVLKAVENVNDIIAPEITGLDALDQVAIDKIMLDLDGTPNKAKLGANAILGVSMAVAKAAAEALDIPLFQYLGGVNAKQLPVPMMNILNGGSHADNNVDIQEFMVMPVGAKTFKEALRMGTEIYHNLKDVLKSKGLATGVGDEGGFAPNLSSNEEALQIIMEAIEAAGYKPGVDIKLALDVAATEFYDEDEKLYKLTGEGVTKTAEEMVDFYEALVKKYPIVSIEDGLSEDDWEGWRVMTERLGDNIQIVGDDLFVTNTERLKKGIQTKTANSILVKLNQIGTITETLDAIEMAKRAGYTTVISHRSGETEDATIADIAVAVNAGQIKTGAPARTDRVAKYNQLLRIEDMLGFTGQYIGNEVFYNIKK</sequence>
<comment type="function">
    <text evidence="1">Catalyzes the reversible conversion of 2-phosphoglycerate (2-PG) into phosphoenolpyruvate (PEP). It is essential for the degradation of carbohydrates via glycolysis.</text>
</comment>
<comment type="catalytic activity">
    <reaction evidence="1">
        <text>(2R)-2-phosphoglycerate = phosphoenolpyruvate + H2O</text>
        <dbReference type="Rhea" id="RHEA:10164"/>
        <dbReference type="ChEBI" id="CHEBI:15377"/>
        <dbReference type="ChEBI" id="CHEBI:58289"/>
        <dbReference type="ChEBI" id="CHEBI:58702"/>
        <dbReference type="EC" id="4.2.1.11"/>
    </reaction>
</comment>
<comment type="cofactor">
    <cofactor evidence="1">
        <name>Mg(2+)</name>
        <dbReference type="ChEBI" id="CHEBI:18420"/>
    </cofactor>
    <text evidence="1">Binds a second Mg(2+) ion via substrate during catalysis.</text>
</comment>
<comment type="pathway">
    <text evidence="1">Carbohydrate degradation; glycolysis; pyruvate from D-glyceraldehyde 3-phosphate: step 4/5.</text>
</comment>
<comment type="subcellular location">
    <subcellularLocation>
        <location evidence="1">Cytoplasm</location>
    </subcellularLocation>
    <subcellularLocation>
        <location evidence="1">Secreted</location>
    </subcellularLocation>
    <subcellularLocation>
        <location evidence="1">Cell surface</location>
    </subcellularLocation>
    <text evidence="1">Fractions of enolase are present in both the cytoplasm and on the cell surface.</text>
</comment>
<comment type="similarity">
    <text evidence="1">Belongs to the enolase family.</text>
</comment>
<proteinExistence type="inferred from homology"/>
<feature type="chain" id="PRO_1000059453" description="Enolase">
    <location>
        <begin position="1"/>
        <end position="430"/>
    </location>
</feature>
<feature type="active site" description="Proton donor" evidence="1">
    <location>
        <position position="205"/>
    </location>
</feature>
<feature type="active site" description="Proton acceptor" evidence="1">
    <location>
        <position position="339"/>
    </location>
</feature>
<feature type="binding site" evidence="1">
    <location>
        <position position="163"/>
    </location>
    <ligand>
        <name>(2R)-2-phosphoglycerate</name>
        <dbReference type="ChEBI" id="CHEBI:58289"/>
    </ligand>
</feature>
<feature type="binding site" evidence="1">
    <location>
        <position position="242"/>
    </location>
    <ligand>
        <name>Mg(2+)</name>
        <dbReference type="ChEBI" id="CHEBI:18420"/>
    </ligand>
</feature>
<feature type="binding site" evidence="1">
    <location>
        <position position="287"/>
    </location>
    <ligand>
        <name>Mg(2+)</name>
        <dbReference type="ChEBI" id="CHEBI:18420"/>
    </ligand>
</feature>
<feature type="binding site" evidence="1">
    <location>
        <position position="314"/>
    </location>
    <ligand>
        <name>Mg(2+)</name>
        <dbReference type="ChEBI" id="CHEBI:18420"/>
    </ligand>
</feature>
<feature type="binding site" evidence="1">
    <location>
        <position position="339"/>
    </location>
    <ligand>
        <name>(2R)-2-phosphoglycerate</name>
        <dbReference type="ChEBI" id="CHEBI:58289"/>
    </ligand>
</feature>
<feature type="binding site" evidence="1">
    <location>
        <position position="368"/>
    </location>
    <ligand>
        <name>(2R)-2-phosphoglycerate</name>
        <dbReference type="ChEBI" id="CHEBI:58289"/>
    </ligand>
</feature>
<feature type="binding site" evidence="1">
    <location>
        <position position="369"/>
    </location>
    <ligand>
        <name>(2R)-2-phosphoglycerate</name>
        <dbReference type="ChEBI" id="CHEBI:58289"/>
    </ligand>
</feature>
<feature type="binding site" evidence="1">
    <location>
        <position position="390"/>
    </location>
    <ligand>
        <name>(2R)-2-phosphoglycerate</name>
        <dbReference type="ChEBI" id="CHEBI:58289"/>
    </ligand>
</feature>
<evidence type="ECO:0000255" key="1">
    <source>
        <dbReference type="HAMAP-Rule" id="MF_00318"/>
    </source>
</evidence>
<accession>A6TU30</accession>
<protein>
    <recommendedName>
        <fullName evidence="1">Enolase</fullName>
        <ecNumber evidence="1">4.2.1.11</ecNumber>
    </recommendedName>
    <alternativeName>
        <fullName evidence="1">2-phospho-D-glycerate hydro-lyase</fullName>
    </alternativeName>
    <alternativeName>
        <fullName evidence="1">2-phosphoglycerate dehydratase</fullName>
    </alternativeName>
</protein>
<name>ENO_ALKMQ</name>
<keyword id="KW-0963">Cytoplasm</keyword>
<keyword id="KW-0324">Glycolysis</keyword>
<keyword id="KW-0456">Lyase</keyword>
<keyword id="KW-0460">Magnesium</keyword>
<keyword id="KW-0479">Metal-binding</keyword>
<keyword id="KW-1185">Reference proteome</keyword>
<keyword id="KW-0964">Secreted</keyword>